<feature type="chain" id="PRO_0000238323" description="ATP synthase subunit alpha">
    <location>
        <begin position="1"/>
        <end position="504"/>
    </location>
</feature>
<feature type="binding site" evidence="2">
    <location>
        <begin position="170"/>
        <end position="177"/>
    </location>
    <ligand>
        <name>ATP</name>
        <dbReference type="ChEBI" id="CHEBI:30616"/>
    </ligand>
</feature>
<feature type="site" description="Required for activity" evidence="2">
    <location>
        <position position="363"/>
    </location>
</feature>
<sequence length="504" mass="54007">MVSIRPDEISSILKQQIADYDKSVSVSNVGTVLQIGDGIARVYGLEKVMAGELVEFEDGTEGIALNLEDDNVGVVLMGEALGVQEGSTVKATGKIASVPVGEAMLGRVVNPLGQQIDGKGEMATTDSRLIESIAPGIIKRKSVHEPMQTGITSIDAMIPIGRGQRELIIGDRQTGKTAIAIDTIINQKGQDVICVYVAVGQKQASVANVVEVLKEKGALDYTIIVNAGASEAAALQYLAPYTGAAIAEHFMYQGKATLVIYDDLTKQAQAYRQMSLLLRRPPGREAYPGDVFYCHSRLLERAAKLSDAMGAGSMTSLPIIETQAGDVSAYIPTNVISITDGQIFLSSDLFNSGLRPAINVGISVSRVGGAAQTKAIKKIAGTLKLELAQFDELAAFSQFASDLDEATQKQLGRGKRLRELLKQPQFDPLNLAEQVAIVYAGVKGLIDEVPEEEVVKFARELRDYLKTNKAEFLKNVLSEKVLSEASESMLKDAISEVKSSMLAA</sequence>
<accession>Q46J57</accession>
<protein>
    <recommendedName>
        <fullName evidence="2">ATP synthase subunit alpha</fullName>
        <ecNumber evidence="2">7.1.2.2</ecNumber>
    </recommendedName>
    <alternativeName>
        <fullName evidence="2">ATP synthase F1 sector subunit alpha</fullName>
    </alternativeName>
    <alternativeName>
        <fullName evidence="2">F-ATPase subunit alpha</fullName>
    </alternativeName>
</protein>
<dbReference type="EC" id="7.1.2.2" evidence="2"/>
<dbReference type="EMBL" id="CP000095">
    <property type="protein sequence ID" value="AAZ58471.1"/>
    <property type="molecule type" value="Genomic_DNA"/>
</dbReference>
<dbReference type="RefSeq" id="WP_011295327.1">
    <property type="nucleotide sequence ID" value="NC_007335.2"/>
</dbReference>
<dbReference type="SMR" id="Q46J57"/>
<dbReference type="STRING" id="59920.PMN2A_0981"/>
<dbReference type="KEGG" id="pmn:PMN2A_0981"/>
<dbReference type="HOGENOM" id="CLU_010091_2_1_3"/>
<dbReference type="OrthoDB" id="9803053at2"/>
<dbReference type="PhylomeDB" id="Q46J57"/>
<dbReference type="Proteomes" id="UP000002535">
    <property type="component" value="Chromosome"/>
</dbReference>
<dbReference type="GO" id="GO:0031676">
    <property type="term" value="C:plasma membrane-derived thylakoid membrane"/>
    <property type="evidence" value="ECO:0007669"/>
    <property type="project" value="UniProtKB-SubCell"/>
</dbReference>
<dbReference type="GO" id="GO:0045259">
    <property type="term" value="C:proton-transporting ATP synthase complex"/>
    <property type="evidence" value="ECO:0007669"/>
    <property type="project" value="UniProtKB-KW"/>
</dbReference>
<dbReference type="GO" id="GO:0043531">
    <property type="term" value="F:ADP binding"/>
    <property type="evidence" value="ECO:0007669"/>
    <property type="project" value="TreeGrafter"/>
</dbReference>
<dbReference type="GO" id="GO:0005524">
    <property type="term" value="F:ATP binding"/>
    <property type="evidence" value="ECO:0007669"/>
    <property type="project" value="UniProtKB-UniRule"/>
</dbReference>
<dbReference type="GO" id="GO:0046933">
    <property type="term" value="F:proton-transporting ATP synthase activity, rotational mechanism"/>
    <property type="evidence" value="ECO:0007669"/>
    <property type="project" value="UniProtKB-UniRule"/>
</dbReference>
<dbReference type="CDD" id="cd18113">
    <property type="entry name" value="ATP-synt_F1_alpha_C"/>
    <property type="match status" value="1"/>
</dbReference>
<dbReference type="CDD" id="cd18116">
    <property type="entry name" value="ATP-synt_F1_alpha_N"/>
    <property type="match status" value="1"/>
</dbReference>
<dbReference type="CDD" id="cd01132">
    <property type="entry name" value="F1-ATPase_alpha_CD"/>
    <property type="match status" value="1"/>
</dbReference>
<dbReference type="FunFam" id="1.20.150.20:FF:000001">
    <property type="entry name" value="ATP synthase subunit alpha"/>
    <property type="match status" value="1"/>
</dbReference>
<dbReference type="FunFam" id="2.40.30.20:FF:000001">
    <property type="entry name" value="ATP synthase subunit alpha"/>
    <property type="match status" value="1"/>
</dbReference>
<dbReference type="FunFam" id="3.40.50.300:FF:000002">
    <property type="entry name" value="ATP synthase subunit alpha"/>
    <property type="match status" value="1"/>
</dbReference>
<dbReference type="Gene3D" id="2.40.30.20">
    <property type="match status" value="1"/>
</dbReference>
<dbReference type="Gene3D" id="1.20.150.20">
    <property type="entry name" value="ATP synthase alpha/beta chain, C-terminal domain"/>
    <property type="match status" value="1"/>
</dbReference>
<dbReference type="Gene3D" id="3.40.50.300">
    <property type="entry name" value="P-loop containing nucleotide triphosphate hydrolases"/>
    <property type="match status" value="1"/>
</dbReference>
<dbReference type="HAMAP" id="MF_01346">
    <property type="entry name" value="ATP_synth_alpha_bact"/>
    <property type="match status" value="1"/>
</dbReference>
<dbReference type="InterPro" id="IPR023366">
    <property type="entry name" value="ATP_synth_asu-like_sf"/>
</dbReference>
<dbReference type="InterPro" id="IPR000793">
    <property type="entry name" value="ATP_synth_asu_C"/>
</dbReference>
<dbReference type="InterPro" id="IPR038376">
    <property type="entry name" value="ATP_synth_asu_C_sf"/>
</dbReference>
<dbReference type="InterPro" id="IPR033732">
    <property type="entry name" value="ATP_synth_F1_a_nt-bd_dom"/>
</dbReference>
<dbReference type="InterPro" id="IPR005294">
    <property type="entry name" value="ATP_synth_F1_asu"/>
</dbReference>
<dbReference type="InterPro" id="IPR020003">
    <property type="entry name" value="ATPase_a/bsu_AS"/>
</dbReference>
<dbReference type="InterPro" id="IPR004100">
    <property type="entry name" value="ATPase_F1/V1/A1_a/bsu_N"/>
</dbReference>
<dbReference type="InterPro" id="IPR036121">
    <property type="entry name" value="ATPase_F1/V1/A1_a/bsu_N_sf"/>
</dbReference>
<dbReference type="InterPro" id="IPR000194">
    <property type="entry name" value="ATPase_F1/V1/A1_a/bsu_nucl-bd"/>
</dbReference>
<dbReference type="InterPro" id="IPR027417">
    <property type="entry name" value="P-loop_NTPase"/>
</dbReference>
<dbReference type="NCBIfam" id="TIGR00962">
    <property type="entry name" value="atpA"/>
    <property type="match status" value="1"/>
</dbReference>
<dbReference type="NCBIfam" id="NF009884">
    <property type="entry name" value="PRK13343.1"/>
    <property type="match status" value="1"/>
</dbReference>
<dbReference type="PANTHER" id="PTHR48082">
    <property type="entry name" value="ATP SYNTHASE SUBUNIT ALPHA, MITOCHONDRIAL"/>
    <property type="match status" value="1"/>
</dbReference>
<dbReference type="PANTHER" id="PTHR48082:SF2">
    <property type="entry name" value="ATP SYNTHASE SUBUNIT ALPHA, MITOCHONDRIAL"/>
    <property type="match status" value="1"/>
</dbReference>
<dbReference type="Pfam" id="PF00006">
    <property type="entry name" value="ATP-synt_ab"/>
    <property type="match status" value="1"/>
</dbReference>
<dbReference type="Pfam" id="PF00306">
    <property type="entry name" value="ATP-synt_ab_C"/>
    <property type="match status" value="1"/>
</dbReference>
<dbReference type="Pfam" id="PF02874">
    <property type="entry name" value="ATP-synt_ab_N"/>
    <property type="match status" value="1"/>
</dbReference>
<dbReference type="PIRSF" id="PIRSF039088">
    <property type="entry name" value="F_ATPase_subunit_alpha"/>
    <property type="match status" value="1"/>
</dbReference>
<dbReference type="SUPFAM" id="SSF47917">
    <property type="entry name" value="C-terminal domain of alpha and beta subunits of F1 ATP synthase"/>
    <property type="match status" value="1"/>
</dbReference>
<dbReference type="SUPFAM" id="SSF50615">
    <property type="entry name" value="N-terminal domain of alpha and beta subunits of F1 ATP synthase"/>
    <property type="match status" value="1"/>
</dbReference>
<dbReference type="SUPFAM" id="SSF52540">
    <property type="entry name" value="P-loop containing nucleoside triphosphate hydrolases"/>
    <property type="match status" value="1"/>
</dbReference>
<dbReference type="PROSITE" id="PS00152">
    <property type="entry name" value="ATPASE_ALPHA_BETA"/>
    <property type="match status" value="1"/>
</dbReference>
<reference key="1">
    <citation type="journal article" date="2007" name="PLoS Genet.">
        <title>Patterns and implications of gene gain and loss in the evolution of Prochlorococcus.</title>
        <authorList>
            <person name="Kettler G.C."/>
            <person name="Martiny A.C."/>
            <person name="Huang K."/>
            <person name="Zucker J."/>
            <person name="Coleman M.L."/>
            <person name="Rodrigue S."/>
            <person name="Chen F."/>
            <person name="Lapidus A."/>
            <person name="Ferriera S."/>
            <person name="Johnson J."/>
            <person name="Steglich C."/>
            <person name="Church G.M."/>
            <person name="Richardson P."/>
            <person name="Chisholm S.W."/>
        </authorList>
    </citation>
    <scope>NUCLEOTIDE SEQUENCE [LARGE SCALE GENOMIC DNA]</scope>
    <source>
        <strain>NATL2A</strain>
    </source>
</reference>
<keyword id="KW-0066">ATP synthesis</keyword>
<keyword id="KW-0067">ATP-binding</keyword>
<keyword id="KW-0139">CF(1)</keyword>
<keyword id="KW-0375">Hydrogen ion transport</keyword>
<keyword id="KW-0406">Ion transport</keyword>
<keyword id="KW-0472">Membrane</keyword>
<keyword id="KW-0547">Nucleotide-binding</keyword>
<keyword id="KW-1185">Reference proteome</keyword>
<keyword id="KW-0793">Thylakoid</keyword>
<keyword id="KW-1278">Translocase</keyword>
<keyword id="KW-0813">Transport</keyword>
<gene>
    <name evidence="2" type="primary">atpA</name>
    <name type="ordered locus">PMN2A_0981</name>
</gene>
<name>ATPA_PROMT</name>
<comment type="function">
    <text evidence="2">Produces ATP from ADP in the presence of a proton gradient across the membrane. The alpha chain is a regulatory subunit.</text>
</comment>
<comment type="catalytic activity">
    <reaction evidence="2">
        <text>ATP + H2O + 4 H(+)(in) = ADP + phosphate + 5 H(+)(out)</text>
        <dbReference type="Rhea" id="RHEA:57720"/>
        <dbReference type="ChEBI" id="CHEBI:15377"/>
        <dbReference type="ChEBI" id="CHEBI:15378"/>
        <dbReference type="ChEBI" id="CHEBI:30616"/>
        <dbReference type="ChEBI" id="CHEBI:43474"/>
        <dbReference type="ChEBI" id="CHEBI:456216"/>
        <dbReference type="EC" id="7.1.2.2"/>
    </reaction>
</comment>
<comment type="subunit">
    <text evidence="1">F-type ATPases have 2 components, CF(1) - the catalytic core - and CF(0) - the membrane proton channel. CF(1) has five subunits: alpha(3), beta(3), gamma(1), delta(1), epsilon(1). CF(0) has four main subunits: a(1), b(1), b'(1) and c(9-12) (By similarity).</text>
</comment>
<comment type="subcellular location">
    <subcellularLocation>
        <location evidence="2">Cellular thylakoid membrane</location>
        <topology evidence="2">Peripheral membrane protein</topology>
    </subcellularLocation>
</comment>
<comment type="similarity">
    <text evidence="2">Belongs to the ATPase alpha/beta chains family.</text>
</comment>
<organism>
    <name type="scientific">Prochlorococcus marinus (strain NATL2A)</name>
    <dbReference type="NCBI Taxonomy" id="59920"/>
    <lineage>
        <taxon>Bacteria</taxon>
        <taxon>Bacillati</taxon>
        <taxon>Cyanobacteriota</taxon>
        <taxon>Cyanophyceae</taxon>
        <taxon>Synechococcales</taxon>
        <taxon>Prochlorococcaceae</taxon>
        <taxon>Prochlorococcus</taxon>
    </lineage>
</organism>
<proteinExistence type="inferred from homology"/>
<evidence type="ECO:0000250" key="1"/>
<evidence type="ECO:0000255" key="2">
    <source>
        <dbReference type="HAMAP-Rule" id="MF_01346"/>
    </source>
</evidence>